<comment type="function">
    <text evidence="1">Part of the tripartite efflux system MacAB-TolC. MacB is a non-canonical ABC transporter that contains transmembrane domains (TMD), which form a pore in the inner membrane, and an ATP-binding domain (NBD), which is responsible for energy generation. Confers resistance against macrolides.</text>
</comment>
<comment type="subunit">
    <text evidence="1">Homodimer. Part of the tripartite efflux system MacAB-TolC, which is composed of an inner membrane transporter, MacB, a periplasmic membrane fusion protein, MacA, and an outer membrane component, TolC. The complex forms a large protein conduit and can translocate molecules across both the inner and outer membranes. Interacts with MacA.</text>
</comment>
<comment type="subcellular location">
    <subcellularLocation>
        <location evidence="1">Cell inner membrane</location>
        <topology evidence="1">Multi-pass membrane protein</topology>
    </subcellularLocation>
</comment>
<comment type="similarity">
    <text evidence="1">Belongs to the ABC transporter superfamily. Macrolide exporter (TC 3.A.1.122) family.</text>
</comment>
<organism>
    <name type="scientific">Escherichia coli O1:K1 / APEC</name>
    <dbReference type="NCBI Taxonomy" id="405955"/>
    <lineage>
        <taxon>Bacteria</taxon>
        <taxon>Pseudomonadati</taxon>
        <taxon>Pseudomonadota</taxon>
        <taxon>Gammaproteobacteria</taxon>
        <taxon>Enterobacterales</taxon>
        <taxon>Enterobacteriaceae</taxon>
        <taxon>Escherichia</taxon>
    </lineage>
</organism>
<reference key="1">
    <citation type="journal article" date="2006" name="J. Bacteriol.">
        <title>Complete DNA sequence of a ColBM plasmid from avian pathogenic Escherichia coli suggests that it evolved from closely related ColV virulence plasmids.</title>
        <authorList>
            <person name="Johnson T.J."/>
            <person name="Johnson S.J."/>
            <person name="Nolan L.K."/>
        </authorList>
    </citation>
    <scope>NUCLEOTIDE SEQUENCE [LARGE SCALE GENOMIC DNA]</scope>
</reference>
<protein>
    <recommendedName>
        <fullName evidence="1">Macrolide export ATP-binding/permease protein MacB 2</fullName>
        <ecNumber evidence="1">7.6.2.-</ecNumber>
    </recommendedName>
</protein>
<accession>P0C2H3</accession>
<accession>Q3L7H3</accession>
<name>MACB2_ECOK1</name>
<proteinExistence type="inferred from homology"/>
<geneLocation type="plasmid">
    <name>pAPEC-O1-ColBM</name>
</geneLocation>
<gene>
    <name evidence="1" type="primary">macB2</name>
    <name type="synonym">etsB</name>
    <name type="ordered locus">Ecok1_ColBM_46970</name>
    <name type="ORF">O1_ColBM_198</name>
</gene>
<evidence type="ECO:0000255" key="1">
    <source>
        <dbReference type="HAMAP-Rule" id="MF_01720"/>
    </source>
</evidence>
<keyword id="KW-0046">Antibiotic resistance</keyword>
<keyword id="KW-0067">ATP-binding</keyword>
<keyword id="KW-0997">Cell inner membrane</keyword>
<keyword id="KW-1003">Cell membrane</keyword>
<keyword id="KW-0472">Membrane</keyword>
<keyword id="KW-0547">Nucleotide-binding</keyword>
<keyword id="KW-0614">Plasmid</keyword>
<keyword id="KW-1185">Reference proteome</keyword>
<keyword id="KW-1278">Translocase</keyword>
<keyword id="KW-0812">Transmembrane</keyword>
<keyword id="KW-1133">Transmembrane helix</keyword>
<keyword id="KW-0813">Transport</keyword>
<feature type="chain" id="PRO_0000278170" description="Macrolide export ATP-binding/permease protein MacB 2">
    <location>
        <begin position="1"/>
        <end position="646"/>
    </location>
</feature>
<feature type="transmembrane region" description="Helical" evidence="1">
    <location>
        <begin position="272"/>
        <end position="292"/>
    </location>
</feature>
<feature type="transmembrane region" description="Helical" evidence="1">
    <location>
        <begin position="518"/>
        <end position="538"/>
    </location>
</feature>
<feature type="transmembrane region" description="Helical" evidence="1">
    <location>
        <begin position="570"/>
        <end position="590"/>
    </location>
</feature>
<feature type="transmembrane region" description="Helical" evidence="1">
    <location>
        <begin position="611"/>
        <end position="631"/>
    </location>
</feature>
<feature type="domain" description="ABC transporter" evidence="1">
    <location>
        <begin position="5"/>
        <end position="243"/>
    </location>
</feature>
<feature type="binding site" evidence="1">
    <location>
        <begin position="41"/>
        <end position="48"/>
    </location>
    <ligand>
        <name>ATP</name>
        <dbReference type="ChEBI" id="CHEBI:30616"/>
    </ligand>
</feature>
<sequence>MKKLIELKGVSRTYGNGDQTRTVLKNVDLTIVAGEMVAIIGASGSGKSTLMNIMGCLDVPNRGDYYIDGQNAACLSPDELARVRREHIGFIFQRYHLIPDLSALGNVEIPAIYANSERDSRRQRATALLGRLGLEGREHHKPCELSGGQQQRVSIARALINGGKIILADEPTGALDSQSGQEVLAILNELNRRGHTVVMVTHDMKVARHAKRIIELCDGEIIADSGGCVSATETLPKTNRIRQSYWKTLLDRTRESMQMALKAMKTHRLRTTLTMIGIVFGIASVVTVVALGEGARQETLEEIKSLGTNVVSIYPGQDLFDDSIESIRTLVPADANALAKQGFIDSVSPEVSASDNIRFLGKSAIASINGVGREHFRVKGIELLQGTTFRDDRNALQEVIIDENTRKAIFDNTGLQALGQIVFLGSVPARVVGIAKSNNRSDASNRITVWMPYSTVMYRIVGKPVLTGISVRLKDNVDNEAAISAISQLLTRRHGIKDFQLYNFEQIRKSIEHTSMTFSILILMVACISLMIGSIGVMNIMLISVTERTHEIGVRMAVGARRSDIMQQFIIEAVLVCLIGGALGIALSYITGALFNALADGIFAAIYSWQAAVAAFFCSTLIGIIFGYLPARKAARMDPVISLASE</sequence>
<dbReference type="EC" id="7.6.2.-" evidence="1"/>
<dbReference type="EMBL" id="DQ381420">
    <property type="protein sequence ID" value="ABD51768.1"/>
    <property type="molecule type" value="Genomic_DNA"/>
</dbReference>
<dbReference type="RefSeq" id="WP_000733250.1">
    <property type="nucleotide sequence ID" value="NZ_CADILS010000115.1"/>
</dbReference>
<dbReference type="SMR" id="P0C2H3"/>
<dbReference type="KEGG" id="ecv:APECO1_O1CoBM198"/>
<dbReference type="HOGENOM" id="CLU_000604_78_1_6"/>
<dbReference type="Proteomes" id="UP000008216">
    <property type="component" value="Plasmid pAPEC-O1-ColBM"/>
</dbReference>
<dbReference type="GO" id="GO:0005886">
    <property type="term" value="C:plasma membrane"/>
    <property type="evidence" value="ECO:0007669"/>
    <property type="project" value="UniProtKB-SubCell"/>
</dbReference>
<dbReference type="GO" id="GO:0005524">
    <property type="term" value="F:ATP binding"/>
    <property type="evidence" value="ECO:0007669"/>
    <property type="project" value="UniProtKB-KW"/>
</dbReference>
<dbReference type="GO" id="GO:0016887">
    <property type="term" value="F:ATP hydrolysis activity"/>
    <property type="evidence" value="ECO:0007669"/>
    <property type="project" value="InterPro"/>
</dbReference>
<dbReference type="GO" id="GO:0022857">
    <property type="term" value="F:transmembrane transporter activity"/>
    <property type="evidence" value="ECO:0007669"/>
    <property type="project" value="TreeGrafter"/>
</dbReference>
<dbReference type="GO" id="GO:0046677">
    <property type="term" value="P:response to antibiotic"/>
    <property type="evidence" value="ECO:0007669"/>
    <property type="project" value="UniProtKB-KW"/>
</dbReference>
<dbReference type="CDD" id="cd03255">
    <property type="entry name" value="ABC_MJ0796_LolCDE_FtsE"/>
    <property type="match status" value="1"/>
</dbReference>
<dbReference type="FunFam" id="3.40.50.300:FF:000032">
    <property type="entry name" value="Export ABC transporter ATP-binding protein"/>
    <property type="match status" value="1"/>
</dbReference>
<dbReference type="Gene3D" id="3.40.50.300">
    <property type="entry name" value="P-loop containing nucleotide triphosphate hydrolases"/>
    <property type="match status" value="1"/>
</dbReference>
<dbReference type="InterPro" id="IPR003593">
    <property type="entry name" value="AAA+_ATPase"/>
</dbReference>
<dbReference type="InterPro" id="IPR003838">
    <property type="entry name" value="ABC3_permease_C"/>
</dbReference>
<dbReference type="InterPro" id="IPR003439">
    <property type="entry name" value="ABC_transporter-like_ATP-bd"/>
</dbReference>
<dbReference type="InterPro" id="IPR017871">
    <property type="entry name" value="ABC_transporter-like_CS"/>
</dbReference>
<dbReference type="InterPro" id="IPR017911">
    <property type="entry name" value="MacB-like_ATP-bd"/>
</dbReference>
<dbReference type="InterPro" id="IPR025857">
    <property type="entry name" value="MacB_PCD"/>
</dbReference>
<dbReference type="InterPro" id="IPR050250">
    <property type="entry name" value="Macrolide_Exporter_MacB"/>
</dbReference>
<dbReference type="InterPro" id="IPR027417">
    <property type="entry name" value="P-loop_NTPase"/>
</dbReference>
<dbReference type="PANTHER" id="PTHR30572:SF14">
    <property type="entry name" value="MACROLIDE EXPORT ATP-BINDING_PERMEASE PROTEIN MACB"/>
    <property type="match status" value="1"/>
</dbReference>
<dbReference type="PANTHER" id="PTHR30572">
    <property type="entry name" value="MEMBRANE COMPONENT OF TRANSPORTER-RELATED"/>
    <property type="match status" value="1"/>
</dbReference>
<dbReference type="Pfam" id="PF00005">
    <property type="entry name" value="ABC_tran"/>
    <property type="match status" value="1"/>
</dbReference>
<dbReference type="Pfam" id="PF02687">
    <property type="entry name" value="FtsX"/>
    <property type="match status" value="1"/>
</dbReference>
<dbReference type="Pfam" id="PF12704">
    <property type="entry name" value="MacB_PCD"/>
    <property type="match status" value="1"/>
</dbReference>
<dbReference type="SMART" id="SM00382">
    <property type="entry name" value="AAA"/>
    <property type="match status" value="1"/>
</dbReference>
<dbReference type="SUPFAM" id="SSF52540">
    <property type="entry name" value="P-loop containing nucleoside triphosphate hydrolases"/>
    <property type="match status" value="1"/>
</dbReference>
<dbReference type="PROSITE" id="PS00211">
    <property type="entry name" value="ABC_TRANSPORTER_1"/>
    <property type="match status" value="1"/>
</dbReference>
<dbReference type="PROSITE" id="PS50893">
    <property type="entry name" value="ABC_TRANSPORTER_2"/>
    <property type="match status" value="1"/>
</dbReference>
<dbReference type="PROSITE" id="PS51267">
    <property type="entry name" value="MACB"/>
    <property type="match status" value="1"/>
</dbReference>